<organism>
    <name type="scientific">Jannaschia sp. (strain CCS1)</name>
    <dbReference type="NCBI Taxonomy" id="290400"/>
    <lineage>
        <taxon>Bacteria</taxon>
        <taxon>Pseudomonadati</taxon>
        <taxon>Pseudomonadota</taxon>
        <taxon>Alphaproteobacteria</taxon>
        <taxon>Rhodobacterales</taxon>
        <taxon>Roseobacteraceae</taxon>
        <taxon>Jannaschia</taxon>
    </lineage>
</organism>
<evidence type="ECO:0000250" key="1"/>
<evidence type="ECO:0000255" key="2">
    <source>
        <dbReference type="HAMAP-Rule" id="MF_01346"/>
    </source>
</evidence>
<keyword id="KW-0066">ATP synthesis</keyword>
<keyword id="KW-0067">ATP-binding</keyword>
<keyword id="KW-0997">Cell inner membrane</keyword>
<keyword id="KW-1003">Cell membrane</keyword>
<keyword id="KW-0139">CF(1)</keyword>
<keyword id="KW-0375">Hydrogen ion transport</keyword>
<keyword id="KW-0406">Ion transport</keyword>
<keyword id="KW-0472">Membrane</keyword>
<keyword id="KW-0547">Nucleotide-binding</keyword>
<keyword id="KW-1185">Reference proteome</keyword>
<keyword id="KW-1278">Translocase</keyword>
<keyword id="KW-0813">Transport</keyword>
<reference key="1">
    <citation type="submission" date="2006-02" db="EMBL/GenBank/DDBJ databases">
        <title>Complete sequence of chromosome of Jannaschia sp. CCS1.</title>
        <authorList>
            <consortium name="US DOE Joint Genome Institute"/>
            <person name="Copeland A."/>
            <person name="Lucas S."/>
            <person name="Lapidus A."/>
            <person name="Barry K."/>
            <person name="Detter J.C."/>
            <person name="Glavina del Rio T."/>
            <person name="Hammon N."/>
            <person name="Israni S."/>
            <person name="Pitluck S."/>
            <person name="Brettin T."/>
            <person name="Bruce D."/>
            <person name="Han C."/>
            <person name="Tapia R."/>
            <person name="Gilna P."/>
            <person name="Chertkov O."/>
            <person name="Saunders E."/>
            <person name="Schmutz J."/>
            <person name="Larimer F."/>
            <person name="Land M."/>
            <person name="Kyrpides N."/>
            <person name="Lykidis A."/>
            <person name="Moran M.A."/>
            <person name="Belas R."/>
            <person name="Ye W."/>
            <person name="Buchan A."/>
            <person name="Gonzalez J.M."/>
            <person name="Schell M.A."/>
            <person name="Richardson P."/>
        </authorList>
    </citation>
    <scope>NUCLEOTIDE SEQUENCE [LARGE SCALE GENOMIC DNA]</scope>
    <source>
        <strain>CCS1</strain>
    </source>
</reference>
<protein>
    <recommendedName>
        <fullName evidence="2">ATP synthase subunit alpha</fullName>
        <ecNumber evidence="2">7.1.2.2</ecNumber>
    </recommendedName>
    <alternativeName>
        <fullName evidence="2">ATP synthase F1 sector subunit alpha</fullName>
    </alternativeName>
    <alternativeName>
        <fullName evidence="2">F-ATPase subunit alpha</fullName>
    </alternativeName>
</protein>
<gene>
    <name evidence="2" type="primary">atpA</name>
    <name type="ordered locus">Jann_1047</name>
</gene>
<proteinExistence type="inferred from homology"/>
<dbReference type="EC" id="7.1.2.2" evidence="2"/>
<dbReference type="EMBL" id="CP000264">
    <property type="protein sequence ID" value="ABD53964.1"/>
    <property type="molecule type" value="Genomic_DNA"/>
</dbReference>
<dbReference type="RefSeq" id="WP_011454171.1">
    <property type="nucleotide sequence ID" value="NC_007802.1"/>
</dbReference>
<dbReference type="SMR" id="Q28TJ8"/>
<dbReference type="STRING" id="290400.Jann_1047"/>
<dbReference type="KEGG" id="jan:Jann_1047"/>
<dbReference type="eggNOG" id="COG0056">
    <property type="taxonomic scope" value="Bacteria"/>
</dbReference>
<dbReference type="HOGENOM" id="CLU_010091_2_1_5"/>
<dbReference type="OrthoDB" id="9803053at2"/>
<dbReference type="Proteomes" id="UP000008326">
    <property type="component" value="Chromosome"/>
</dbReference>
<dbReference type="GO" id="GO:0005886">
    <property type="term" value="C:plasma membrane"/>
    <property type="evidence" value="ECO:0007669"/>
    <property type="project" value="UniProtKB-SubCell"/>
</dbReference>
<dbReference type="GO" id="GO:0045259">
    <property type="term" value="C:proton-transporting ATP synthase complex"/>
    <property type="evidence" value="ECO:0007669"/>
    <property type="project" value="UniProtKB-KW"/>
</dbReference>
<dbReference type="GO" id="GO:0043531">
    <property type="term" value="F:ADP binding"/>
    <property type="evidence" value="ECO:0007669"/>
    <property type="project" value="TreeGrafter"/>
</dbReference>
<dbReference type="GO" id="GO:0005524">
    <property type="term" value="F:ATP binding"/>
    <property type="evidence" value="ECO:0007669"/>
    <property type="project" value="UniProtKB-UniRule"/>
</dbReference>
<dbReference type="GO" id="GO:0046933">
    <property type="term" value="F:proton-transporting ATP synthase activity, rotational mechanism"/>
    <property type="evidence" value="ECO:0007669"/>
    <property type="project" value="UniProtKB-UniRule"/>
</dbReference>
<dbReference type="CDD" id="cd18113">
    <property type="entry name" value="ATP-synt_F1_alpha_C"/>
    <property type="match status" value="1"/>
</dbReference>
<dbReference type="CDD" id="cd18116">
    <property type="entry name" value="ATP-synt_F1_alpha_N"/>
    <property type="match status" value="1"/>
</dbReference>
<dbReference type="CDD" id="cd01132">
    <property type="entry name" value="F1-ATPase_alpha_CD"/>
    <property type="match status" value="1"/>
</dbReference>
<dbReference type="FunFam" id="1.20.150.20:FF:000001">
    <property type="entry name" value="ATP synthase subunit alpha"/>
    <property type="match status" value="1"/>
</dbReference>
<dbReference type="FunFam" id="2.40.30.20:FF:000001">
    <property type="entry name" value="ATP synthase subunit alpha"/>
    <property type="match status" value="1"/>
</dbReference>
<dbReference type="FunFam" id="3.40.50.300:FF:002432">
    <property type="entry name" value="ATP synthase subunit alpha, mitochondrial"/>
    <property type="match status" value="1"/>
</dbReference>
<dbReference type="Gene3D" id="2.40.30.20">
    <property type="match status" value="1"/>
</dbReference>
<dbReference type="Gene3D" id="1.20.150.20">
    <property type="entry name" value="ATP synthase alpha/beta chain, C-terminal domain"/>
    <property type="match status" value="1"/>
</dbReference>
<dbReference type="Gene3D" id="3.40.50.300">
    <property type="entry name" value="P-loop containing nucleotide triphosphate hydrolases"/>
    <property type="match status" value="1"/>
</dbReference>
<dbReference type="HAMAP" id="MF_01346">
    <property type="entry name" value="ATP_synth_alpha_bact"/>
    <property type="match status" value="1"/>
</dbReference>
<dbReference type="InterPro" id="IPR023366">
    <property type="entry name" value="ATP_synth_asu-like_sf"/>
</dbReference>
<dbReference type="InterPro" id="IPR000793">
    <property type="entry name" value="ATP_synth_asu_C"/>
</dbReference>
<dbReference type="InterPro" id="IPR038376">
    <property type="entry name" value="ATP_synth_asu_C_sf"/>
</dbReference>
<dbReference type="InterPro" id="IPR033732">
    <property type="entry name" value="ATP_synth_F1_a_nt-bd_dom"/>
</dbReference>
<dbReference type="InterPro" id="IPR005294">
    <property type="entry name" value="ATP_synth_F1_asu"/>
</dbReference>
<dbReference type="InterPro" id="IPR020003">
    <property type="entry name" value="ATPase_a/bsu_AS"/>
</dbReference>
<dbReference type="InterPro" id="IPR004100">
    <property type="entry name" value="ATPase_F1/V1/A1_a/bsu_N"/>
</dbReference>
<dbReference type="InterPro" id="IPR036121">
    <property type="entry name" value="ATPase_F1/V1/A1_a/bsu_N_sf"/>
</dbReference>
<dbReference type="InterPro" id="IPR000194">
    <property type="entry name" value="ATPase_F1/V1/A1_a/bsu_nucl-bd"/>
</dbReference>
<dbReference type="InterPro" id="IPR027417">
    <property type="entry name" value="P-loop_NTPase"/>
</dbReference>
<dbReference type="NCBIfam" id="TIGR00962">
    <property type="entry name" value="atpA"/>
    <property type="match status" value="1"/>
</dbReference>
<dbReference type="NCBIfam" id="NF009884">
    <property type="entry name" value="PRK13343.1"/>
    <property type="match status" value="1"/>
</dbReference>
<dbReference type="PANTHER" id="PTHR48082">
    <property type="entry name" value="ATP SYNTHASE SUBUNIT ALPHA, MITOCHONDRIAL"/>
    <property type="match status" value="1"/>
</dbReference>
<dbReference type="PANTHER" id="PTHR48082:SF2">
    <property type="entry name" value="ATP SYNTHASE SUBUNIT ALPHA, MITOCHONDRIAL"/>
    <property type="match status" value="1"/>
</dbReference>
<dbReference type="Pfam" id="PF00006">
    <property type="entry name" value="ATP-synt_ab"/>
    <property type="match status" value="1"/>
</dbReference>
<dbReference type="Pfam" id="PF00306">
    <property type="entry name" value="ATP-synt_ab_C"/>
    <property type="match status" value="1"/>
</dbReference>
<dbReference type="Pfam" id="PF02874">
    <property type="entry name" value="ATP-synt_ab_N"/>
    <property type="match status" value="1"/>
</dbReference>
<dbReference type="PIRSF" id="PIRSF039088">
    <property type="entry name" value="F_ATPase_subunit_alpha"/>
    <property type="match status" value="1"/>
</dbReference>
<dbReference type="SUPFAM" id="SSF47917">
    <property type="entry name" value="C-terminal domain of alpha and beta subunits of F1 ATP synthase"/>
    <property type="match status" value="1"/>
</dbReference>
<dbReference type="SUPFAM" id="SSF50615">
    <property type="entry name" value="N-terminal domain of alpha and beta subunits of F1 ATP synthase"/>
    <property type="match status" value="1"/>
</dbReference>
<dbReference type="SUPFAM" id="SSF52540">
    <property type="entry name" value="P-loop containing nucleoside triphosphate hydrolases"/>
    <property type="match status" value="1"/>
</dbReference>
<dbReference type="PROSITE" id="PS00152">
    <property type="entry name" value="ATPASE_ALPHA_BETA"/>
    <property type="match status" value="1"/>
</dbReference>
<name>ATPA_JANSC</name>
<accession>Q28TJ8</accession>
<sequence>MAIQAAEISQILKDQIKSFGQDAQVAEVGRVLSVGDGIARVYGLDNVQAGEMVEFPGGIQGMALNLEADNVGVVIFGSDRDIKEGDTVKRTNSIVDVPAGNELLGRVVDGLGNPLDGKGPINASERRVADSKAPGIIPRKSVHEPMATGLKAIDAMIPVGRGQRELIIGDRQTGKTAVALDTILNQKSYNDAAGDDENKKLYCIYVAVGQKRSTVAQLVKKLEETGAIEYSIVVAATASDPAPMQFLAPYAATAMAEFFRDNGRHALIVYDDLSKQAVSYRQMSLLLRRPPGREAYPGDVFYLHSRLLERSSKLNEDNGGGSLTALPVIETQGGDVSAFIPTNVISITDGQIFLETELFFQGIRPAVNTGLSVSRVGSSAQTKAMSSVAGPVKLSLAQYREMAAFAQFGSDLDASTQRLLARGARLTELMKQPQYSPLTNAEIVTMIFAGTNGFLDEIKVSDVGRFEEGLLNHMRSNKKDVLDWITNEDPKIKGDAADKLKAAIEEFAADFA</sequence>
<feature type="chain" id="PRO_0000256092" description="ATP synthase subunit alpha">
    <location>
        <begin position="1"/>
        <end position="512"/>
    </location>
</feature>
<feature type="binding site" evidence="2">
    <location>
        <begin position="169"/>
        <end position="176"/>
    </location>
    <ligand>
        <name>ATP</name>
        <dbReference type="ChEBI" id="CHEBI:30616"/>
    </ligand>
</feature>
<feature type="site" description="Required for activity" evidence="2">
    <location>
        <position position="372"/>
    </location>
</feature>
<comment type="function">
    <text evidence="2">Produces ATP from ADP in the presence of a proton gradient across the membrane. The alpha chain is a regulatory subunit.</text>
</comment>
<comment type="catalytic activity">
    <reaction evidence="2">
        <text>ATP + H2O + 4 H(+)(in) = ADP + phosphate + 5 H(+)(out)</text>
        <dbReference type="Rhea" id="RHEA:57720"/>
        <dbReference type="ChEBI" id="CHEBI:15377"/>
        <dbReference type="ChEBI" id="CHEBI:15378"/>
        <dbReference type="ChEBI" id="CHEBI:30616"/>
        <dbReference type="ChEBI" id="CHEBI:43474"/>
        <dbReference type="ChEBI" id="CHEBI:456216"/>
        <dbReference type="EC" id="7.1.2.2"/>
    </reaction>
</comment>
<comment type="subunit">
    <text evidence="1">F-type ATPases have 2 components, CF(1) - the catalytic core - and CF(0) - the membrane proton channel. CF(1) has five subunits: alpha(3), beta(3), gamma(1), delta(1), epsilon(1). CF(0) has four main subunits: a(1), b(1), b'(1) and c(9-12) (By similarity).</text>
</comment>
<comment type="subcellular location">
    <subcellularLocation>
        <location evidence="2">Cell inner membrane</location>
        <topology evidence="2">Peripheral membrane protein</topology>
    </subcellularLocation>
</comment>
<comment type="similarity">
    <text evidence="2">Belongs to the ATPase alpha/beta chains family.</text>
</comment>